<keyword id="KW-0067">ATP-binding</keyword>
<keyword id="KW-0418">Kinase</keyword>
<keyword id="KW-0547">Nucleotide-binding</keyword>
<keyword id="KW-1185">Reference proteome</keyword>
<keyword id="KW-0808">Transferase</keyword>
<protein>
    <recommendedName>
        <fullName evidence="1">5-dehydro-2-deoxygluconokinase</fullName>
        <ecNumber evidence="1">2.7.1.92</ecNumber>
    </recommendedName>
    <alternativeName>
        <fullName evidence="1">2-deoxy-5-keto-D-gluconate kinase</fullName>
        <shortName evidence="1">DKG kinase</shortName>
    </alternativeName>
</protein>
<name>IOLC_CLOTE</name>
<gene>
    <name evidence="1" type="primary">iolC</name>
    <name type="ordered locus">CTC_00508</name>
</gene>
<accession>Q898F0</accession>
<reference key="1">
    <citation type="journal article" date="2003" name="Proc. Natl. Acad. Sci. U.S.A.">
        <title>The genome sequence of Clostridium tetani, the causative agent of tetanus disease.</title>
        <authorList>
            <person name="Brueggemann H."/>
            <person name="Baeumer S."/>
            <person name="Fricke W.F."/>
            <person name="Wiezer A."/>
            <person name="Liesegang H."/>
            <person name="Decker I."/>
            <person name="Herzberg C."/>
            <person name="Martinez-Arias R."/>
            <person name="Merkl R."/>
            <person name="Henne A."/>
            <person name="Gottschalk G."/>
        </authorList>
    </citation>
    <scope>NUCLEOTIDE SEQUENCE [LARGE SCALE GENOMIC DNA]</scope>
    <source>
        <strain>Massachusetts / E88</strain>
    </source>
</reference>
<proteinExistence type="inferred from homology"/>
<evidence type="ECO:0000255" key="1">
    <source>
        <dbReference type="HAMAP-Rule" id="MF_01668"/>
    </source>
</evidence>
<comment type="function">
    <text evidence="1">Catalyzes the phosphorylation of 5-dehydro-2-deoxy-D-gluconate (2-deoxy-5-keto-D-gluconate or DKG) to 6-phospho-5-dehydro-2-deoxy-D-gluconate (DKGP).</text>
</comment>
<comment type="catalytic activity">
    <reaction evidence="1">
        <text>5-dehydro-2-deoxy-D-gluconate + ATP = 6-phospho-5-dehydro-2-deoxy-D-gluconate + ADP + H(+)</text>
        <dbReference type="Rhea" id="RHEA:13497"/>
        <dbReference type="ChEBI" id="CHEBI:15378"/>
        <dbReference type="ChEBI" id="CHEBI:16669"/>
        <dbReference type="ChEBI" id="CHEBI:30616"/>
        <dbReference type="ChEBI" id="CHEBI:57949"/>
        <dbReference type="ChEBI" id="CHEBI:456216"/>
        <dbReference type="EC" id="2.7.1.92"/>
    </reaction>
</comment>
<comment type="pathway">
    <text evidence="1">Polyol metabolism; myo-inositol degradation into acetyl-CoA; acetyl-CoA from myo-inositol: step 5/7.</text>
</comment>
<comment type="similarity">
    <text evidence="1">Belongs to the carbohydrate kinase PfkB family.</text>
</comment>
<organism>
    <name type="scientific">Clostridium tetani (strain Massachusetts / E88)</name>
    <dbReference type="NCBI Taxonomy" id="212717"/>
    <lineage>
        <taxon>Bacteria</taxon>
        <taxon>Bacillati</taxon>
        <taxon>Bacillota</taxon>
        <taxon>Clostridia</taxon>
        <taxon>Eubacteriales</taxon>
        <taxon>Clostridiaceae</taxon>
        <taxon>Clostridium</taxon>
    </lineage>
</organism>
<sequence>MNYIKFDEKKPLDVIPIGRVTIDFNPNEINRPLEESRTFTKYLGGSPGNIAVGLARLGKKVGFLSTVSDDQFGNFVVNYLKNEGIDISQINRAKNGEKLGLTFTEILSPKESSILMYRKGIADLQLSSKEVSEDYIKSAKAIVISGTALSKSPSREAAFVALEYAKKHNTRIIFDLDYREYTWNCKEEIAIYYSLAARMSDVIMGSREEFNLMEGLISPEESNDKETAERWIGYGNKIVVIKHGKDGSTAYLHDGTSYKIKPFPVKLLKSFGGGDAYASAFIYGIMEGWDVIDALEFGSASAAMLVASHSCSEAMPKVEEIKQFIKEKKEEHGEMVVRG</sequence>
<dbReference type="EC" id="2.7.1.92" evidence="1"/>
<dbReference type="EMBL" id="AE015927">
    <property type="protein sequence ID" value="AAO35131.1"/>
    <property type="molecule type" value="Genomic_DNA"/>
</dbReference>
<dbReference type="RefSeq" id="WP_011098800.1">
    <property type="nucleotide sequence ID" value="NC_004557.1"/>
</dbReference>
<dbReference type="SMR" id="Q898F0"/>
<dbReference type="STRING" id="212717.CTC_00508"/>
<dbReference type="GeneID" id="24254230"/>
<dbReference type="KEGG" id="ctc:CTC_00508"/>
<dbReference type="HOGENOM" id="CLU_027634_6_0_9"/>
<dbReference type="OrthoDB" id="9813569at2"/>
<dbReference type="UniPathway" id="UPA00076">
    <property type="reaction ID" value="UER00146"/>
</dbReference>
<dbReference type="Proteomes" id="UP000001412">
    <property type="component" value="Chromosome"/>
</dbReference>
<dbReference type="GO" id="GO:0047590">
    <property type="term" value="F:5-dehydro-2-deoxygluconokinase activity"/>
    <property type="evidence" value="ECO:0007669"/>
    <property type="project" value="UniProtKB-UniRule"/>
</dbReference>
<dbReference type="GO" id="GO:0005524">
    <property type="term" value="F:ATP binding"/>
    <property type="evidence" value="ECO:0007669"/>
    <property type="project" value="UniProtKB-UniRule"/>
</dbReference>
<dbReference type="GO" id="GO:0019310">
    <property type="term" value="P:inositol catabolic process"/>
    <property type="evidence" value="ECO:0007669"/>
    <property type="project" value="UniProtKB-UniRule"/>
</dbReference>
<dbReference type="CDD" id="cd01166">
    <property type="entry name" value="KdgK"/>
    <property type="match status" value="1"/>
</dbReference>
<dbReference type="Gene3D" id="3.40.1190.20">
    <property type="match status" value="1"/>
</dbReference>
<dbReference type="Gene3D" id="2.20.150.10">
    <property type="entry name" value="putative 5-dehydro-2- deoxygluconokinase"/>
    <property type="match status" value="1"/>
</dbReference>
<dbReference type="HAMAP" id="MF_01668">
    <property type="entry name" value="IolC"/>
    <property type="match status" value="1"/>
</dbReference>
<dbReference type="InterPro" id="IPR002173">
    <property type="entry name" value="Carboh/pur_kinase_PfkB_CS"/>
</dbReference>
<dbReference type="InterPro" id="IPR022841">
    <property type="entry name" value="DKG_kinase_firmi"/>
</dbReference>
<dbReference type="InterPro" id="IPR030830">
    <property type="entry name" value="Myo_inos_IolC"/>
</dbReference>
<dbReference type="InterPro" id="IPR023314">
    <property type="entry name" value="Myo_inos_IolC-like_sf"/>
</dbReference>
<dbReference type="InterPro" id="IPR050306">
    <property type="entry name" value="PfkB_Carbo_kinase"/>
</dbReference>
<dbReference type="InterPro" id="IPR011611">
    <property type="entry name" value="PfkB_dom"/>
</dbReference>
<dbReference type="InterPro" id="IPR029056">
    <property type="entry name" value="Ribokinase-like"/>
</dbReference>
<dbReference type="NCBIfam" id="TIGR04382">
    <property type="entry name" value="myo_inos_iolC_N"/>
    <property type="match status" value="1"/>
</dbReference>
<dbReference type="PANTHER" id="PTHR43085:SF49">
    <property type="entry name" value="5-DEHYDRO-2-DEOXYGLUCONOKINASE"/>
    <property type="match status" value="1"/>
</dbReference>
<dbReference type="PANTHER" id="PTHR43085">
    <property type="entry name" value="HEXOKINASE FAMILY MEMBER"/>
    <property type="match status" value="1"/>
</dbReference>
<dbReference type="Pfam" id="PF00294">
    <property type="entry name" value="PfkB"/>
    <property type="match status" value="1"/>
</dbReference>
<dbReference type="SUPFAM" id="SSF53613">
    <property type="entry name" value="Ribokinase-like"/>
    <property type="match status" value="1"/>
</dbReference>
<dbReference type="PROSITE" id="PS00584">
    <property type="entry name" value="PFKB_KINASES_2"/>
    <property type="match status" value="1"/>
</dbReference>
<feature type="chain" id="PRO_0000352298" description="5-dehydro-2-deoxygluconokinase">
    <location>
        <begin position="1"/>
        <end position="339"/>
    </location>
</feature>